<proteinExistence type="evidence at protein level"/>
<comment type="function">
    <text evidence="2 3">Catalyzes the alpha,gamma-elimination of L-methionine to produce methanethiol, 2-oxobutanoate and ammonia, and that of L-homocysteine (By similarity). Can also use L-cysteine as substrate, catalyzing its alpha,beta-elimination; this activity seems to only minimally contribute to the production of hydrogen sulfide (H2S) by F.nucleatum in the oral cavity, which is toxic for a large variety of cells in periodontal regions (PubMed:21798982).</text>
</comment>
<comment type="catalytic activity">
    <reaction evidence="2">
        <text>L-methionine + H2O = methanethiol + 2-oxobutanoate + NH4(+)</text>
        <dbReference type="Rhea" id="RHEA:23800"/>
        <dbReference type="ChEBI" id="CHEBI:15377"/>
        <dbReference type="ChEBI" id="CHEBI:16007"/>
        <dbReference type="ChEBI" id="CHEBI:16763"/>
        <dbReference type="ChEBI" id="CHEBI:28938"/>
        <dbReference type="ChEBI" id="CHEBI:57844"/>
        <dbReference type="EC" id="4.4.1.11"/>
    </reaction>
</comment>
<comment type="catalytic activity">
    <reaction evidence="2">
        <text>L-homocysteine + H2O = 2-oxobutanoate + hydrogen sulfide + NH4(+) + H(+)</text>
        <dbReference type="Rhea" id="RHEA:14501"/>
        <dbReference type="ChEBI" id="CHEBI:15377"/>
        <dbReference type="ChEBI" id="CHEBI:15378"/>
        <dbReference type="ChEBI" id="CHEBI:16763"/>
        <dbReference type="ChEBI" id="CHEBI:28938"/>
        <dbReference type="ChEBI" id="CHEBI:29919"/>
        <dbReference type="ChEBI" id="CHEBI:58199"/>
        <dbReference type="EC" id="4.4.1.2"/>
    </reaction>
</comment>
<comment type="catalytic activity">
    <reaction evidence="3">
        <text>L-cysteine + H2O = hydrogen sulfide + pyruvate + NH4(+) + H(+)</text>
        <dbReference type="Rhea" id="RHEA:24931"/>
        <dbReference type="ChEBI" id="CHEBI:15361"/>
        <dbReference type="ChEBI" id="CHEBI:15377"/>
        <dbReference type="ChEBI" id="CHEBI:15378"/>
        <dbReference type="ChEBI" id="CHEBI:28938"/>
        <dbReference type="ChEBI" id="CHEBI:29919"/>
        <dbReference type="ChEBI" id="CHEBI:35235"/>
        <dbReference type="EC" id="4.4.1.28"/>
    </reaction>
</comment>
<comment type="cofactor">
    <cofactor evidence="1 5">
        <name>pyridoxal 5'-phosphate</name>
        <dbReference type="ChEBI" id="CHEBI:597326"/>
    </cofactor>
</comment>
<comment type="biophysicochemical properties">
    <kinetics>
        <KM evidence="3">0.32 mM for L-cysteine</KM>
        <text evidence="3">kcat is 0.69 sec(-1) for the production of H(2)S from L-cysteine.</text>
    </kinetics>
</comment>
<comment type="subunit">
    <text evidence="3">Homotetramer.</text>
</comment>
<comment type="similarity">
    <text evidence="5">Belongs to the trans-sulfuration enzymes family. L-methionine gamma-lyase subfamily.</text>
</comment>
<reference key="1">
    <citation type="journal article" date="2002" name="J. Bacteriol.">
        <title>Genome sequence and analysis of the oral bacterium Fusobacterium nucleatum strain ATCC 25586.</title>
        <authorList>
            <person name="Kapatral V."/>
            <person name="Anderson I."/>
            <person name="Ivanova N."/>
            <person name="Reznik G."/>
            <person name="Los T."/>
            <person name="Lykidis A."/>
            <person name="Bhattacharyya A."/>
            <person name="Bartman A."/>
            <person name="Gardner W."/>
            <person name="Grechkin G."/>
            <person name="Zhu L."/>
            <person name="Vasieva O."/>
            <person name="Chu L."/>
            <person name="Kogan Y."/>
            <person name="Chaga O."/>
            <person name="Goltsman E."/>
            <person name="Bernal A."/>
            <person name="Larsen N."/>
            <person name="D'Souza M."/>
            <person name="Walunas T."/>
            <person name="Pusch G."/>
            <person name="Haselkorn R."/>
            <person name="Fonstein M."/>
            <person name="Kyrpides N.C."/>
            <person name="Overbeek R."/>
        </authorList>
    </citation>
    <scope>NUCLEOTIDE SEQUENCE [LARGE SCALE GENOMIC DNA]</scope>
    <source>
        <strain>ATCC 25586 / DSM 15643 / BCRC 10681 / CIP 101130 / JCM 8532 / KCTC 2640 / LMG 13131 / VPI 4355</strain>
    </source>
</reference>
<reference key="2">
    <citation type="journal article" date="2011" name="Microbiology">
        <title>Identification of an L-methionine gamma-lyase involved in the production of hydrogen sulfide from L-cysteine in Fusobacterium nucleatum subsp. nucleatum ATCC 25586.</title>
        <authorList>
            <person name="Suwabe K."/>
            <person name="Yoshida Y."/>
            <person name="Nagano K."/>
            <person name="Yoshimura F."/>
        </authorList>
    </citation>
    <scope>FUNCTION</scope>
    <scope>CATALYTIC ACTIVITY</scope>
    <scope>BIOPHYSICOCHEMICAL PROPERTIES</scope>
    <scope>SUBUNIT</scope>
    <scope>IDENTIFICATION BY MASS SPECTROMETRY</scope>
    <source>
        <strain>ATCC 25586 / DSM 15643 / BCRC 10681 / CIP 101130 / JCM 8532 / KCTC 2640 / LMG 13131 / VPI 4355</strain>
    </source>
</reference>
<sequence length="395" mass="43306">MEMKKSGLGTTAIHAGTLKNLYGTLAMPIYQTSTFIFDSAEQGGRRFALEEAGYIYTRLGNPTTTVLENKIAALEEGEAGIAMSSGMGAISSTLWTVLKAGDHVVTDKTLYGCTFALMNHGLTRFGVEVTFVDTSNLEEVKNAMKKNTRVVYLETPANPNLKIVDLEALSKIAHTNPNTLVIVDNTFATPYMQKPLKLGVDIVVHSATKYLNGHGDVIAGLVVTRQELADQIRFVGLKDMTGAVLGPQEAYYIIRGLKTFEIRMERHCKNARTIVDFLNKHPKVEKVYYPGLETHPGYEIAKKQMKDFGAMISFELKGGFEAGKTLLNNLKLCSLAVSLGDTETLIQHPASMTHSPYTKEEREVAGITDGLVRLSVGLENVEDIIADLEQGLEKI</sequence>
<protein>
    <recommendedName>
        <fullName evidence="4">L-methionine gamma-lyase</fullName>
        <shortName evidence="5">MGL</shortName>
        <ecNumber evidence="2">4.4.1.11</ecNumber>
    </recommendedName>
    <alternativeName>
        <fullName evidence="2">Homocysteine desulfhydrase</fullName>
        <ecNumber evidence="2">4.4.1.2</ecNumber>
    </alternativeName>
    <alternativeName>
        <fullName evidence="6">L-cysteine desulfidase</fullName>
        <ecNumber evidence="3">4.4.1.28</ecNumber>
    </alternativeName>
</protein>
<organism>
    <name type="scientific">Fusobacterium nucleatum subsp. nucleatum (strain ATCC 25586 / DSM 15643 / BCRC 10681 / CIP 101130 / JCM 8532 / KCTC 2640 / LMG 13131 / VPI 4355)</name>
    <dbReference type="NCBI Taxonomy" id="190304"/>
    <lineage>
        <taxon>Bacteria</taxon>
        <taxon>Fusobacteriati</taxon>
        <taxon>Fusobacteriota</taxon>
        <taxon>Fusobacteriia</taxon>
        <taxon>Fusobacteriales</taxon>
        <taxon>Fusobacteriaceae</taxon>
        <taxon>Fusobacterium</taxon>
    </lineage>
</organism>
<gene>
    <name evidence="7" type="ordered locus">FN1419</name>
</gene>
<dbReference type="EC" id="4.4.1.11" evidence="2"/>
<dbReference type="EC" id="4.4.1.2" evidence="2"/>
<dbReference type="EC" id="4.4.1.28" evidence="3"/>
<dbReference type="EMBL" id="AE009951">
    <property type="protein sequence ID" value="AAL95612.1"/>
    <property type="molecule type" value="Genomic_DNA"/>
</dbReference>
<dbReference type="RefSeq" id="NP_604313.1">
    <property type="nucleotide sequence ID" value="NC_003454.1"/>
</dbReference>
<dbReference type="RefSeq" id="WP_011017138.1">
    <property type="nucleotide sequence ID" value="NZ_CP028101.1"/>
</dbReference>
<dbReference type="PDB" id="6LXU">
    <property type="method" value="X-ray"/>
    <property type="resolution" value="1.19 A"/>
    <property type="chains" value="A=1-395"/>
</dbReference>
<dbReference type="PDB" id="7BQW">
    <property type="method" value="X-ray"/>
    <property type="resolution" value="2.50 A"/>
    <property type="chains" value="A/B/C/D=1-395"/>
</dbReference>
<dbReference type="PDBsum" id="6LXU"/>
<dbReference type="PDBsum" id="7BQW"/>
<dbReference type="SMR" id="Q8RDT4"/>
<dbReference type="FunCoup" id="Q8RDT4">
    <property type="interactions" value="300"/>
</dbReference>
<dbReference type="STRING" id="190304.FN1419"/>
<dbReference type="ChEMBL" id="CHEMBL4879552"/>
<dbReference type="PaxDb" id="190304-FN1419"/>
<dbReference type="EnsemblBacteria" id="AAL95612">
    <property type="protein sequence ID" value="AAL95612"/>
    <property type="gene ID" value="FN1419"/>
</dbReference>
<dbReference type="GeneID" id="79784388"/>
<dbReference type="KEGG" id="fnu:FN1419"/>
<dbReference type="PATRIC" id="fig|190304.8.peg.1980"/>
<dbReference type="eggNOG" id="COG0626">
    <property type="taxonomic scope" value="Bacteria"/>
</dbReference>
<dbReference type="HOGENOM" id="CLU_018986_2_0_0"/>
<dbReference type="InParanoid" id="Q8RDT4"/>
<dbReference type="BioCyc" id="FNUC190304:G1FZS-1989-MONOMER"/>
<dbReference type="BRENDA" id="4.4.1.11">
    <property type="organism ID" value="11865"/>
</dbReference>
<dbReference type="Proteomes" id="UP000002521">
    <property type="component" value="Chromosome"/>
</dbReference>
<dbReference type="GO" id="GO:0005737">
    <property type="term" value="C:cytoplasm"/>
    <property type="evidence" value="ECO:0000318"/>
    <property type="project" value="GO_Central"/>
</dbReference>
<dbReference type="GO" id="GO:0016846">
    <property type="term" value="F:carbon-sulfur lyase activity"/>
    <property type="evidence" value="ECO:0000318"/>
    <property type="project" value="GO_Central"/>
</dbReference>
<dbReference type="GO" id="GO:0047982">
    <property type="term" value="F:homocysteine desulfhydrase activity"/>
    <property type="evidence" value="ECO:0007669"/>
    <property type="project" value="UniProtKB-EC"/>
</dbReference>
<dbReference type="GO" id="GO:0080146">
    <property type="term" value="F:L-cysteine desulfhydrase activity"/>
    <property type="evidence" value="ECO:0007669"/>
    <property type="project" value="RHEA"/>
</dbReference>
<dbReference type="GO" id="GO:0018826">
    <property type="term" value="F:methionine gamma-lyase activity"/>
    <property type="evidence" value="ECO:0007669"/>
    <property type="project" value="UniProtKB-EC"/>
</dbReference>
<dbReference type="GO" id="GO:0030170">
    <property type="term" value="F:pyridoxal phosphate binding"/>
    <property type="evidence" value="ECO:0000318"/>
    <property type="project" value="GO_Central"/>
</dbReference>
<dbReference type="GO" id="GO:0019346">
    <property type="term" value="P:transsulfuration"/>
    <property type="evidence" value="ECO:0000318"/>
    <property type="project" value="GO_Central"/>
</dbReference>
<dbReference type="CDD" id="cd00614">
    <property type="entry name" value="CGS_like"/>
    <property type="match status" value="1"/>
</dbReference>
<dbReference type="FunFam" id="3.40.640.10:FF:000046">
    <property type="entry name" value="Cystathionine gamma-lyase"/>
    <property type="match status" value="1"/>
</dbReference>
<dbReference type="FunFam" id="3.90.1150.10:FF:000008">
    <property type="entry name" value="Cystathionine gamma-synthase"/>
    <property type="match status" value="1"/>
</dbReference>
<dbReference type="Gene3D" id="3.90.1150.10">
    <property type="entry name" value="Aspartate Aminotransferase, domain 1"/>
    <property type="match status" value="1"/>
</dbReference>
<dbReference type="Gene3D" id="3.40.640.10">
    <property type="entry name" value="Type I PLP-dependent aspartate aminotransferase-like (Major domain)"/>
    <property type="match status" value="1"/>
</dbReference>
<dbReference type="InterPro" id="IPR000277">
    <property type="entry name" value="Cys/Met-Metab_PyrdxlP-dep_enz"/>
</dbReference>
<dbReference type="InterPro" id="IPR054542">
    <property type="entry name" value="Cys_met_metab_PP"/>
</dbReference>
<dbReference type="InterPro" id="IPR006237">
    <property type="entry name" value="L-Met_gamma_lys"/>
</dbReference>
<dbReference type="InterPro" id="IPR015424">
    <property type="entry name" value="PyrdxlP-dep_Trfase"/>
</dbReference>
<dbReference type="InterPro" id="IPR015421">
    <property type="entry name" value="PyrdxlP-dep_Trfase_major"/>
</dbReference>
<dbReference type="InterPro" id="IPR015422">
    <property type="entry name" value="PyrdxlP-dep_Trfase_small"/>
</dbReference>
<dbReference type="NCBIfam" id="TIGR01328">
    <property type="entry name" value="met_gam_lyase"/>
    <property type="match status" value="1"/>
</dbReference>
<dbReference type="NCBIfam" id="NF004876">
    <property type="entry name" value="PRK06234.1"/>
    <property type="match status" value="1"/>
</dbReference>
<dbReference type="PANTHER" id="PTHR11808:SF80">
    <property type="entry name" value="CYSTATHIONINE GAMMA-LYASE"/>
    <property type="match status" value="1"/>
</dbReference>
<dbReference type="PANTHER" id="PTHR11808">
    <property type="entry name" value="TRANS-SULFURATION ENZYME FAMILY MEMBER"/>
    <property type="match status" value="1"/>
</dbReference>
<dbReference type="Pfam" id="PF01053">
    <property type="entry name" value="Cys_Met_Meta_PP"/>
    <property type="match status" value="1"/>
</dbReference>
<dbReference type="PIRSF" id="PIRSF001434">
    <property type="entry name" value="CGS"/>
    <property type="match status" value="1"/>
</dbReference>
<dbReference type="SUPFAM" id="SSF53383">
    <property type="entry name" value="PLP-dependent transferases"/>
    <property type="match status" value="1"/>
</dbReference>
<dbReference type="PROSITE" id="PS00868">
    <property type="entry name" value="CYS_MET_METAB_PP"/>
    <property type="match status" value="1"/>
</dbReference>
<feature type="chain" id="PRO_0000436012" description="L-methionine gamma-lyase">
    <location>
        <begin position="1"/>
        <end position="395"/>
    </location>
</feature>
<feature type="binding site" evidence="1">
    <location>
        <begin position="56"/>
        <end position="58"/>
    </location>
    <ligand>
        <name>pyridoxal 5'-phosphate</name>
        <dbReference type="ChEBI" id="CHEBI:597326"/>
        <note>ligand shared between dimeric partners</note>
    </ligand>
</feature>
<feature type="binding site" description="in other chain" evidence="1">
    <location>
        <begin position="86"/>
        <end position="87"/>
    </location>
    <ligand>
        <name>pyridoxal 5'-phosphate</name>
        <dbReference type="ChEBI" id="CHEBI:597326"/>
        <note>ligand shared between dimeric partners</note>
    </ligand>
</feature>
<feature type="binding site" evidence="1">
    <location>
        <position position="111"/>
    </location>
    <ligand>
        <name>substrate</name>
    </ligand>
</feature>
<feature type="binding site" description="in other chain" evidence="1">
    <location>
        <begin position="206"/>
        <end position="208"/>
    </location>
    <ligand>
        <name>pyridoxal 5'-phosphate</name>
        <dbReference type="ChEBI" id="CHEBI:597326"/>
        <note>ligand shared between dimeric partners</note>
    </ligand>
</feature>
<feature type="binding site" evidence="1">
    <location>
        <position position="373"/>
    </location>
    <ligand>
        <name>substrate</name>
    </ligand>
</feature>
<feature type="modified residue" description="N6-(pyridoxal phosphate)lysine" evidence="1">
    <location>
        <position position="209"/>
    </location>
</feature>
<feature type="helix" evidence="8">
    <location>
        <begin position="8"/>
        <end position="14"/>
    </location>
</feature>
<feature type="helix" evidence="9">
    <location>
        <begin position="19"/>
        <end position="22"/>
    </location>
</feature>
<feature type="strand" evidence="9">
    <location>
        <begin position="23"/>
        <end position="26"/>
    </location>
</feature>
<feature type="helix" evidence="8">
    <location>
        <begin position="40"/>
        <end position="47"/>
    </location>
</feature>
<feature type="turn" evidence="8">
    <location>
        <begin position="57"/>
        <end position="59"/>
    </location>
</feature>
<feature type="helix" evidence="8">
    <location>
        <begin position="62"/>
        <end position="75"/>
    </location>
</feature>
<feature type="strand" evidence="8">
    <location>
        <begin position="78"/>
        <end position="85"/>
    </location>
</feature>
<feature type="helix" evidence="8">
    <location>
        <begin position="86"/>
        <end position="97"/>
    </location>
</feature>
<feature type="strand" evidence="8">
    <location>
        <begin position="103"/>
        <end position="110"/>
    </location>
</feature>
<feature type="helix" evidence="8">
    <location>
        <begin position="112"/>
        <end position="120"/>
    </location>
</feature>
<feature type="helix" evidence="8">
    <location>
        <begin position="122"/>
        <end position="125"/>
    </location>
</feature>
<feature type="strand" evidence="8">
    <location>
        <begin position="128"/>
        <end position="132"/>
    </location>
</feature>
<feature type="helix" evidence="8">
    <location>
        <begin position="137"/>
        <end position="143"/>
    </location>
</feature>
<feature type="strand" evidence="8">
    <location>
        <begin position="148"/>
        <end position="157"/>
    </location>
</feature>
<feature type="turn" evidence="8">
    <location>
        <begin position="158"/>
        <end position="161"/>
    </location>
</feature>
<feature type="helix" evidence="8">
    <location>
        <begin position="166"/>
        <end position="173"/>
    </location>
</feature>
<feature type="strand" evidence="8">
    <location>
        <begin position="180"/>
        <end position="184"/>
    </location>
</feature>
<feature type="turn" evidence="8">
    <location>
        <begin position="186"/>
        <end position="188"/>
    </location>
</feature>
<feature type="helix" evidence="8">
    <location>
        <begin position="189"/>
        <end position="192"/>
    </location>
</feature>
<feature type="helix" evidence="8">
    <location>
        <begin position="195"/>
        <end position="198"/>
    </location>
</feature>
<feature type="strand" evidence="8">
    <location>
        <begin position="201"/>
        <end position="206"/>
    </location>
</feature>
<feature type="turn" evidence="9">
    <location>
        <begin position="207"/>
        <end position="212"/>
    </location>
</feature>
<feature type="strand" evidence="8">
    <location>
        <begin position="220"/>
        <end position="224"/>
    </location>
</feature>
<feature type="helix" evidence="8">
    <location>
        <begin position="226"/>
        <end position="234"/>
    </location>
</feature>
<feature type="helix" evidence="8">
    <location>
        <begin position="236"/>
        <end position="239"/>
    </location>
</feature>
<feature type="helix" evidence="8">
    <location>
        <begin position="247"/>
        <end position="257"/>
    </location>
</feature>
<feature type="helix" evidence="8">
    <location>
        <begin position="260"/>
        <end position="279"/>
    </location>
</feature>
<feature type="strand" evidence="8">
    <location>
        <begin position="284"/>
        <end position="288"/>
    </location>
</feature>
<feature type="helix" evidence="8">
    <location>
        <begin position="298"/>
        <end position="304"/>
    </location>
</feature>
<feature type="strand" evidence="8">
    <location>
        <begin position="310"/>
        <end position="316"/>
    </location>
</feature>
<feature type="helix" evidence="8">
    <location>
        <begin position="319"/>
        <end position="329"/>
    </location>
</feature>
<feature type="strand" evidence="8">
    <location>
        <begin position="331"/>
        <end position="335"/>
    </location>
</feature>
<feature type="strand" evidence="8">
    <location>
        <begin position="345"/>
        <end position="347"/>
    </location>
</feature>
<feature type="turn" evidence="8">
    <location>
        <begin position="349"/>
        <end position="356"/>
    </location>
</feature>
<feature type="helix" evidence="8">
    <location>
        <begin position="359"/>
        <end position="364"/>
    </location>
</feature>
<feature type="strand" evidence="8">
    <location>
        <begin position="371"/>
        <end position="375"/>
    </location>
</feature>
<feature type="helix" evidence="8">
    <location>
        <begin position="381"/>
        <end position="393"/>
    </location>
</feature>
<evidence type="ECO:0000250" key="1">
    <source>
        <dbReference type="UniProtKB" id="P13254"/>
    </source>
</evidence>
<evidence type="ECO:0000250" key="2">
    <source>
        <dbReference type="UniProtKB" id="Q8L0X4"/>
    </source>
</evidence>
<evidence type="ECO:0000269" key="3">
    <source>
    </source>
</evidence>
<evidence type="ECO:0000303" key="4">
    <source>
    </source>
</evidence>
<evidence type="ECO:0000305" key="5"/>
<evidence type="ECO:0000305" key="6">
    <source>
    </source>
</evidence>
<evidence type="ECO:0000312" key="7">
    <source>
        <dbReference type="EMBL" id="AAL95612.1"/>
    </source>
</evidence>
<evidence type="ECO:0007829" key="8">
    <source>
        <dbReference type="PDB" id="6LXU"/>
    </source>
</evidence>
<evidence type="ECO:0007829" key="9">
    <source>
        <dbReference type="PDB" id="7BQW"/>
    </source>
</evidence>
<name>MEGL_FUSNN</name>
<keyword id="KW-0002">3D-structure</keyword>
<keyword id="KW-0456">Lyase</keyword>
<keyword id="KW-0663">Pyridoxal phosphate</keyword>
<keyword id="KW-1185">Reference proteome</keyword>
<accession>Q8RDT4</accession>